<proteinExistence type="predicted"/>
<accession>P09557</accession>
<accession>P77571</accession>
<reference key="1">
    <citation type="journal article" date="1988" name="Nucleic Acids Res.">
        <title>Identification and sequence of gene dicB: translation of the division inhibitor from an in-phase internal start.</title>
        <authorList>
            <person name="Cam K."/>
            <person name="Bejar S."/>
            <person name="Gil D."/>
            <person name="Bouche J.-P."/>
        </authorList>
    </citation>
    <scope>NUCLEOTIDE SEQUENCE [GENOMIC DNA]</scope>
</reference>
<reference key="2">
    <citation type="journal article" date="1996" name="DNA Res.">
        <title>A 570-kb DNA sequence of the Escherichia coli K-12 genome corresponding to the 28.0-40.1 min region on the linkage map.</title>
        <authorList>
            <person name="Aiba H."/>
            <person name="Baba T."/>
            <person name="Fujita K."/>
            <person name="Hayashi K."/>
            <person name="Inada T."/>
            <person name="Isono K."/>
            <person name="Itoh T."/>
            <person name="Kasai H."/>
            <person name="Kashimoto K."/>
            <person name="Kimura S."/>
            <person name="Kitakawa M."/>
            <person name="Kitagawa M."/>
            <person name="Makino K."/>
            <person name="Miki T."/>
            <person name="Mizobuchi K."/>
            <person name="Mori H."/>
            <person name="Mori T."/>
            <person name="Motomura K."/>
            <person name="Nakade S."/>
            <person name="Nakamura Y."/>
            <person name="Nashimoto H."/>
            <person name="Nishio Y."/>
            <person name="Oshima T."/>
            <person name="Saito N."/>
            <person name="Sampei G."/>
            <person name="Seki Y."/>
            <person name="Sivasundaram S."/>
            <person name="Tagami H."/>
            <person name="Takeda J."/>
            <person name="Takemoto K."/>
            <person name="Takeuchi Y."/>
            <person name="Wada C."/>
            <person name="Yamamoto Y."/>
            <person name="Horiuchi T."/>
        </authorList>
    </citation>
    <scope>NUCLEOTIDE SEQUENCE [LARGE SCALE GENOMIC DNA]</scope>
    <source>
        <strain>K12 / W3110 / ATCC 27325 / DSM 5911</strain>
    </source>
</reference>
<reference key="3">
    <citation type="journal article" date="1997" name="Science">
        <title>The complete genome sequence of Escherichia coli K-12.</title>
        <authorList>
            <person name="Blattner F.R."/>
            <person name="Plunkett G. III"/>
            <person name="Bloch C.A."/>
            <person name="Perna N.T."/>
            <person name="Burland V."/>
            <person name="Riley M."/>
            <person name="Collado-Vides J."/>
            <person name="Glasner J.D."/>
            <person name="Rode C.K."/>
            <person name="Mayhew G.F."/>
            <person name="Gregor J."/>
            <person name="Davis N.W."/>
            <person name="Kirkpatrick H.A."/>
            <person name="Goeden M.A."/>
            <person name="Rose D.J."/>
            <person name="Mau B."/>
            <person name="Shao Y."/>
        </authorList>
    </citation>
    <scope>NUCLEOTIDE SEQUENCE [LARGE SCALE GENOMIC DNA]</scope>
    <source>
        <strain>K12 / MG1655 / ATCC 47076</strain>
    </source>
</reference>
<reference key="4">
    <citation type="journal article" date="2006" name="Mol. Syst. Biol.">
        <title>Highly accurate genome sequences of Escherichia coli K-12 strains MG1655 and W3110.</title>
        <authorList>
            <person name="Hayashi K."/>
            <person name="Morooka N."/>
            <person name="Yamamoto Y."/>
            <person name="Fujita K."/>
            <person name="Isono K."/>
            <person name="Choi S."/>
            <person name="Ohtsubo E."/>
            <person name="Baba T."/>
            <person name="Wanner B.L."/>
            <person name="Mori H."/>
            <person name="Horiuchi T."/>
        </authorList>
    </citation>
    <scope>NUCLEOTIDE SEQUENCE [LARGE SCALE GENOMIC DNA]</scope>
    <source>
        <strain>K12 / W3110 / ATCC 27325 / DSM 5911</strain>
    </source>
</reference>
<reference key="5">
    <citation type="journal article" date="2012" name="Mol. Microbiol.">
        <title>YeeU enhances the bundling of cytoskeletal polymers of MreB and FtsZ, antagonizing the CbtA (YeeV) toxicity in Escherichia coli.</title>
        <authorList>
            <person name="Masuda H."/>
            <person name="Tan Q."/>
            <person name="Awano N."/>
            <person name="Wu K.P."/>
            <person name="Inouye M."/>
        </authorList>
    </citation>
    <scope>NEUTRALIZED BY CBEA</scope>
    <source>
        <strain>K12 / BW25113</strain>
    </source>
</reference>
<gene>
    <name type="primary">dicB</name>
    <name type="ordered locus">b1575</name>
    <name type="ordered locus">JW1566</name>
</gene>
<protein>
    <recommendedName>
        <fullName>Division inhibition protein DicB</fullName>
    </recommendedName>
</protein>
<dbReference type="EMBL" id="X07465">
    <property type="protein sequence ID" value="CAA30351.1"/>
    <property type="molecule type" value="Genomic_DNA"/>
</dbReference>
<dbReference type="EMBL" id="U00096">
    <property type="protein sequence ID" value="AAC74647.1"/>
    <property type="molecule type" value="Genomic_DNA"/>
</dbReference>
<dbReference type="EMBL" id="AP009048">
    <property type="protein sequence ID" value="BAA15279.1"/>
    <property type="molecule type" value="Genomic_DNA"/>
</dbReference>
<dbReference type="PIR" id="A64913">
    <property type="entry name" value="CEECDB"/>
</dbReference>
<dbReference type="RefSeq" id="NP_416092.1">
    <property type="nucleotide sequence ID" value="NC_000913.3"/>
</dbReference>
<dbReference type="RefSeq" id="WP_000854559.1">
    <property type="nucleotide sequence ID" value="NZ_STEB01000003.1"/>
</dbReference>
<dbReference type="BioGRID" id="4261062">
    <property type="interactions" value="86"/>
</dbReference>
<dbReference type="BioGRID" id="850470">
    <property type="interactions" value="4"/>
</dbReference>
<dbReference type="DIP" id="DIP-9440N"/>
<dbReference type="FunCoup" id="P09557">
    <property type="interactions" value="9"/>
</dbReference>
<dbReference type="IntAct" id="P09557">
    <property type="interactions" value="6"/>
</dbReference>
<dbReference type="STRING" id="511145.b1575"/>
<dbReference type="PaxDb" id="511145-b1575"/>
<dbReference type="EnsemblBacteria" id="AAC74647">
    <property type="protein sequence ID" value="AAC74647"/>
    <property type="gene ID" value="b1575"/>
</dbReference>
<dbReference type="GeneID" id="86859660"/>
<dbReference type="GeneID" id="946110"/>
<dbReference type="KEGG" id="ecj:JW1566"/>
<dbReference type="KEGG" id="eco:b1575"/>
<dbReference type="KEGG" id="ecoc:C3026_09070"/>
<dbReference type="PATRIC" id="fig|1411691.4.peg.687"/>
<dbReference type="EchoBASE" id="EB0223"/>
<dbReference type="eggNOG" id="ENOG5031KUY">
    <property type="taxonomic scope" value="Bacteria"/>
</dbReference>
<dbReference type="HOGENOM" id="CLU_208424_0_0_6"/>
<dbReference type="InParanoid" id="P09557"/>
<dbReference type="OMA" id="NQICIVS"/>
<dbReference type="OrthoDB" id="9874615at2"/>
<dbReference type="BioCyc" id="EcoCyc:EG10227-MONOMER"/>
<dbReference type="PRO" id="PR:P09557"/>
<dbReference type="Proteomes" id="UP000000625">
    <property type="component" value="Chromosome"/>
</dbReference>
<dbReference type="GO" id="GO:0051301">
    <property type="term" value="P:cell division"/>
    <property type="evidence" value="ECO:0007669"/>
    <property type="project" value="UniProtKB-KW"/>
</dbReference>
<dbReference type="GO" id="GO:0051782">
    <property type="term" value="P:negative regulation of cell division"/>
    <property type="evidence" value="ECO:0000314"/>
    <property type="project" value="EcoCyc"/>
</dbReference>
<dbReference type="GO" id="GO:0051302">
    <property type="term" value="P:regulation of cell division"/>
    <property type="evidence" value="ECO:0000315"/>
    <property type="project" value="EcoCyc"/>
</dbReference>
<dbReference type="InterPro" id="IPR008022">
    <property type="entry name" value="DicB"/>
</dbReference>
<dbReference type="Pfam" id="PF05358">
    <property type="entry name" value="DicB"/>
    <property type="match status" value="1"/>
</dbReference>
<sequence length="62" mass="6964">MKTLLPNVNTSEGCFEIGVTISNPVFTEDAINKRKQERELLNKICIVSMLARLRLMPKGCAQ</sequence>
<organism>
    <name type="scientific">Escherichia coli (strain K12)</name>
    <dbReference type="NCBI Taxonomy" id="83333"/>
    <lineage>
        <taxon>Bacteria</taxon>
        <taxon>Pseudomonadati</taxon>
        <taxon>Pseudomonadota</taxon>
        <taxon>Gammaproteobacteria</taxon>
        <taxon>Enterobacterales</taxon>
        <taxon>Enterobacteriaceae</taxon>
        <taxon>Escherichia</taxon>
    </lineage>
</organism>
<keyword id="KW-0131">Cell cycle</keyword>
<keyword id="KW-0132">Cell division</keyword>
<keyword id="KW-1185">Reference proteome</keyword>
<evidence type="ECO:0000269" key="1">
    <source>
    </source>
</evidence>
<evidence type="ECO:0000305" key="2"/>
<comment type="function">
    <text evidence="1">Involved in cell division inhibition; this function can be repressed by DicA and DicC proteins as well as antitoxin CbeA (yeeU).</text>
</comment>
<name>DICB_ECOLI</name>
<feature type="chain" id="PRO_0000079895" description="Division inhibition protein DicB">
    <location>
        <begin position="1"/>
        <end position="62"/>
    </location>
</feature>
<feature type="sequence conflict" description="In Ref. 1; CAA30351." evidence="2" ref="1">
    <original>E</original>
    <variation>Q</variation>
    <location>
        <position position="39"/>
    </location>
</feature>